<sequence>MLSQFTRSLSCFVKPTPPKLNKLTRTMTVLPKILQDARPKVSPELDYSTYSNYQNFKINHTDLNLNISFDDSIVNGFVTFNLNKIDKSCNEIRLDTSFLTVDSVEIDDAKVDFQLKDRLEPLGSQLIINPPTATSLNNEFNLKLGFSTTKDCTALQWLNGEQTSSGKPYVFSQLEAIHARALFPCFDTPSVKSTFNAAITSTLPVVFSGIEQSVVDNGNGTKTYNFKQSVPIPAYLIGIASGDLVSGEIGPRSKVYTEPFRLKDCEWEFSGDVEKFIQAAEKIIFPYEWGTYDILVNVNSYPYGGMESPNMTFATPTLIAYDKSNIDVIAHELAHSWSGNLVTNCSWNHFWLNEGWTVYLERRIVAAIHGEATRHFSALIGWNDLANSISAMKNPDRFSTLIQNLNDGTDPDEAFSSVPYEKGFNLLFHLETILGGPKEFDPFIKHYFTKFSKKSLDSYQFFDTLFEFFADKREILDAVDWETWLYKPGMPPKPKFITTLADNVYSLAEKWATEIKNGNTTEDDLKQAFTAADIKDFNSNQIVLFLDTLVQNKEIQWNNHHTAAKTLLKIYEDSIVKSRNAEVVFRTYRFEITAQLKESYPQLAEWLATVGRMKFVRPGYRLLNSVDRPLALATFEKLQNIYHPICKALVKQDLEA</sequence>
<keyword id="KW-0963">Cytoplasm</keyword>
<keyword id="KW-0378">Hydrolase</keyword>
<keyword id="KW-0479">Metal-binding</keyword>
<keyword id="KW-0482">Metalloprotease</keyword>
<keyword id="KW-0539">Nucleus</keyword>
<keyword id="KW-0645">Protease</keyword>
<keyword id="KW-1185">Reference proteome</keyword>
<keyword id="KW-0862">Zinc</keyword>
<dbReference type="EC" id="3.4.11.-"/>
<dbReference type="EC" id="3.3.2.10"/>
<dbReference type="EMBL" id="DS480391">
    <property type="protein sequence ID" value="EDO18291.1"/>
    <property type="molecule type" value="Genomic_DNA"/>
</dbReference>
<dbReference type="RefSeq" id="XP_001646149.1">
    <property type="nucleotide sequence ID" value="XM_001646099.1"/>
</dbReference>
<dbReference type="SMR" id="A7THG7"/>
<dbReference type="FunCoup" id="A7THG7">
    <property type="interactions" value="1091"/>
</dbReference>
<dbReference type="STRING" id="436907.A7THG7"/>
<dbReference type="MEROPS" id="M01.034"/>
<dbReference type="GeneID" id="5546571"/>
<dbReference type="KEGG" id="vpo:Kpol_1039p41"/>
<dbReference type="eggNOG" id="KOG1047">
    <property type="taxonomic scope" value="Eukaryota"/>
</dbReference>
<dbReference type="HOGENOM" id="CLU_014505_1_1_1"/>
<dbReference type="InParanoid" id="A7THG7"/>
<dbReference type="OMA" id="CTALQWM"/>
<dbReference type="OrthoDB" id="79562at2759"/>
<dbReference type="PhylomeDB" id="A7THG7"/>
<dbReference type="Proteomes" id="UP000000267">
    <property type="component" value="Unassembled WGS sequence"/>
</dbReference>
<dbReference type="GO" id="GO:0005829">
    <property type="term" value="C:cytosol"/>
    <property type="evidence" value="ECO:0007669"/>
    <property type="project" value="TreeGrafter"/>
</dbReference>
<dbReference type="GO" id="GO:0000328">
    <property type="term" value="C:fungal-type vacuole lumen"/>
    <property type="evidence" value="ECO:0007669"/>
    <property type="project" value="EnsemblFungi"/>
</dbReference>
<dbReference type="GO" id="GO:0005771">
    <property type="term" value="C:multivesicular body"/>
    <property type="evidence" value="ECO:0007669"/>
    <property type="project" value="EnsemblFungi"/>
</dbReference>
<dbReference type="GO" id="GO:0005634">
    <property type="term" value="C:nucleus"/>
    <property type="evidence" value="ECO:0007669"/>
    <property type="project" value="UniProtKB-SubCell"/>
</dbReference>
<dbReference type="GO" id="GO:0061957">
    <property type="term" value="C:NVT complex"/>
    <property type="evidence" value="ECO:0007669"/>
    <property type="project" value="EnsemblFungi"/>
</dbReference>
<dbReference type="GO" id="GO:0004177">
    <property type="term" value="F:aminopeptidase activity"/>
    <property type="evidence" value="ECO:0000250"/>
    <property type="project" value="UniProtKB"/>
</dbReference>
<dbReference type="GO" id="GO:0004301">
    <property type="term" value="F:epoxide hydrolase activity"/>
    <property type="evidence" value="ECO:0000250"/>
    <property type="project" value="UniProtKB"/>
</dbReference>
<dbReference type="GO" id="GO:0008237">
    <property type="term" value="F:metallopeptidase activity"/>
    <property type="evidence" value="ECO:0007669"/>
    <property type="project" value="UniProtKB-KW"/>
</dbReference>
<dbReference type="GO" id="GO:0008270">
    <property type="term" value="F:zinc ion binding"/>
    <property type="evidence" value="ECO:0000250"/>
    <property type="project" value="UniProtKB"/>
</dbReference>
<dbReference type="GO" id="GO:0120113">
    <property type="term" value="P:cytoplasm to vacuole targeting by the NVT pathway"/>
    <property type="evidence" value="ECO:0007669"/>
    <property type="project" value="EnsemblFungi"/>
</dbReference>
<dbReference type="GO" id="GO:0006629">
    <property type="term" value="P:lipid metabolic process"/>
    <property type="evidence" value="ECO:0007669"/>
    <property type="project" value="EnsemblFungi"/>
</dbReference>
<dbReference type="GO" id="GO:0043171">
    <property type="term" value="P:peptide catabolic process"/>
    <property type="evidence" value="ECO:0000250"/>
    <property type="project" value="UniProtKB"/>
</dbReference>
<dbReference type="GO" id="GO:0030163">
    <property type="term" value="P:protein catabolic process"/>
    <property type="evidence" value="ECO:0007669"/>
    <property type="project" value="EnsemblFungi"/>
</dbReference>
<dbReference type="GO" id="GO:0006508">
    <property type="term" value="P:proteolysis"/>
    <property type="evidence" value="ECO:0007669"/>
    <property type="project" value="UniProtKB-KW"/>
</dbReference>
<dbReference type="CDD" id="cd09599">
    <property type="entry name" value="M1_LTA4H"/>
    <property type="match status" value="1"/>
</dbReference>
<dbReference type="FunFam" id="1.10.390.10:FF:000009">
    <property type="entry name" value="Leukotriene A(4) hydrolase"/>
    <property type="match status" value="1"/>
</dbReference>
<dbReference type="FunFam" id="1.25.40.320:FF:000001">
    <property type="entry name" value="Leukotriene A(4) hydrolase"/>
    <property type="match status" value="1"/>
</dbReference>
<dbReference type="FunFam" id="2.60.40.1730:FF:000004">
    <property type="entry name" value="Leukotriene A(4) hydrolase"/>
    <property type="match status" value="1"/>
</dbReference>
<dbReference type="FunFam" id="3.30.2010.30:FF:000001">
    <property type="entry name" value="Leukotriene A(4) hydrolase"/>
    <property type="match status" value="1"/>
</dbReference>
<dbReference type="Gene3D" id="3.30.2010.30">
    <property type="match status" value="1"/>
</dbReference>
<dbReference type="Gene3D" id="1.10.390.10">
    <property type="entry name" value="Neutral Protease Domain 2"/>
    <property type="match status" value="1"/>
</dbReference>
<dbReference type="Gene3D" id="1.25.40.320">
    <property type="entry name" value="Peptidase M1, leukotriene A4 hydrolase/aminopeptidase C-terminal domain"/>
    <property type="match status" value="1"/>
</dbReference>
<dbReference type="Gene3D" id="2.60.40.1730">
    <property type="entry name" value="tricorn interacting facor f3 domain"/>
    <property type="match status" value="1"/>
</dbReference>
<dbReference type="InterPro" id="IPR045357">
    <property type="entry name" value="Aminopeptidase_N-like_N"/>
</dbReference>
<dbReference type="InterPro" id="IPR042097">
    <property type="entry name" value="Aminopeptidase_N-like_N_sf"/>
</dbReference>
<dbReference type="InterPro" id="IPR016024">
    <property type="entry name" value="ARM-type_fold"/>
</dbReference>
<dbReference type="InterPro" id="IPR012777">
    <property type="entry name" value="LTA4H"/>
</dbReference>
<dbReference type="InterPro" id="IPR049980">
    <property type="entry name" value="LTA4H_cat"/>
</dbReference>
<dbReference type="InterPro" id="IPR038502">
    <property type="entry name" value="M1_LTA-4_hydro/amino_C_sf"/>
</dbReference>
<dbReference type="InterPro" id="IPR034015">
    <property type="entry name" value="M1_LTA4H"/>
</dbReference>
<dbReference type="InterPro" id="IPR001930">
    <property type="entry name" value="Peptidase_M1"/>
</dbReference>
<dbReference type="InterPro" id="IPR015211">
    <property type="entry name" value="Peptidase_M1_C"/>
</dbReference>
<dbReference type="InterPro" id="IPR014782">
    <property type="entry name" value="Peptidase_M1_dom"/>
</dbReference>
<dbReference type="InterPro" id="IPR027268">
    <property type="entry name" value="Peptidase_M4/M1_CTD_sf"/>
</dbReference>
<dbReference type="NCBIfam" id="TIGR02411">
    <property type="entry name" value="leuko_A4_hydro"/>
    <property type="match status" value="1"/>
</dbReference>
<dbReference type="PANTHER" id="PTHR45726">
    <property type="entry name" value="LEUKOTRIENE A-4 HYDROLASE"/>
    <property type="match status" value="1"/>
</dbReference>
<dbReference type="PANTHER" id="PTHR45726:SF3">
    <property type="entry name" value="LEUKOTRIENE A-4 HYDROLASE"/>
    <property type="match status" value="1"/>
</dbReference>
<dbReference type="Pfam" id="PF09127">
    <property type="entry name" value="Leuk-A4-hydro_C"/>
    <property type="match status" value="1"/>
</dbReference>
<dbReference type="Pfam" id="PF01433">
    <property type="entry name" value="Peptidase_M1"/>
    <property type="match status" value="1"/>
</dbReference>
<dbReference type="Pfam" id="PF17900">
    <property type="entry name" value="Peptidase_M1_N"/>
    <property type="match status" value="1"/>
</dbReference>
<dbReference type="PRINTS" id="PR00756">
    <property type="entry name" value="ALADIPTASE"/>
</dbReference>
<dbReference type="SMART" id="SM01263">
    <property type="entry name" value="Leuk-A4-hydro_C"/>
    <property type="match status" value="1"/>
</dbReference>
<dbReference type="SUPFAM" id="SSF48371">
    <property type="entry name" value="ARM repeat"/>
    <property type="match status" value="1"/>
</dbReference>
<dbReference type="SUPFAM" id="SSF63737">
    <property type="entry name" value="Leukotriene A4 hydrolase N-terminal domain"/>
    <property type="match status" value="1"/>
</dbReference>
<dbReference type="SUPFAM" id="SSF55486">
    <property type="entry name" value="Metalloproteases ('zincins'), catalytic domain"/>
    <property type="match status" value="1"/>
</dbReference>
<dbReference type="PROSITE" id="PS00142">
    <property type="entry name" value="ZINC_PROTEASE"/>
    <property type="match status" value="1"/>
</dbReference>
<gene>
    <name type="ORF">Kpol_1039p41</name>
</gene>
<feature type="chain" id="PRO_0000324941" description="Leucine aminopeptidase 2">
    <location>
        <begin position="1"/>
        <end position="656"/>
    </location>
</feature>
<feature type="active site" description="Proton acceptor" evidence="3">
    <location>
        <position position="332"/>
    </location>
</feature>
<feature type="active site" description="Proton donor" evidence="3">
    <location>
        <position position="420"/>
    </location>
</feature>
<feature type="binding site" evidence="1">
    <location>
        <begin position="173"/>
        <end position="175"/>
    </location>
    <ligand>
        <name>substrate</name>
    </ligand>
</feature>
<feature type="binding site" evidence="1">
    <location>
        <begin position="302"/>
        <end position="307"/>
    </location>
    <ligand>
        <name>substrate</name>
    </ligand>
</feature>
<feature type="binding site" evidence="3">
    <location>
        <position position="331"/>
    </location>
    <ligand>
        <name>Zn(2+)</name>
        <dbReference type="ChEBI" id="CHEBI:29105"/>
        <note>catalytic</note>
    </ligand>
</feature>
<feature type="binding site" evidence="3">
    <location>
        <position position="335"/>
    </location>
    <ligand>
        <name>Zn(2+)</name>
        <dbReference type="ChEBI" id="CHEBI:29105"/>
        <note>catalytic</note>
    </ligand>
</feature>
<feature type="binding site" evidence="3">
    <location>
        <position position="354"/>
    </location>
    <ligand>
        <name>Zn(2+)</name>
        <dbReference type="ChEBI" id="CHEBI:29105"/>
        <note>catalytic</note>
    </ligand>
</feature>
<evidence type="ECO:0000250" key="1"/>
<evidence type="ECO:0000250" key="2">
    <source>
        <dbReference type="UniProtKB" id="Q10740"/>
    </source>
</evidence>
<evidence type="ECO:0000255" key="3">
    <source>
        <dbReference type="PROSITE-ProRule" id="PRU10095"/>
    </source>
</evidence>
<evidence type="ECO:0000305" key="4"/>
<proteinExistence type="inferred from homology"/>
<name>LKHA4_VANPO</name>
<protein>
    <recommendedName>
        <fullName>Leucine aminopeptidase 2</fullName>
        <ecNumber>3.4.11.-</ecNumber>
    </recommendedName>
    <alternativeName>
        <fullName>Epoxide hydrolase</fullName>
        <ecNumber>3.3.2.10</ecNumber>
    </alternativeName>
    <alternativeName>
        <fullName>Leukotriene A-4 hydrolase homolog</fullName>
        <shortName>LTA-4 hydrolase</shortName>
    </alternativeName>
</protein>
<organism>
    <name type="scientific">Vanderwaltozyma polyspora (strain ATCC 22028 / DSM 70294 / BCRC 21397 / CBS 2163 / NBRC 10782 / NRRL Y-8283 / UCD 57-17)</name>
    <name type="common">Kluyveromyces polysporus</name>
    <dbReference type="NCBI Taxonomy" id="436907"/>
    <lineage>
        <taxon>Eukaryota</taxon>
        <taxon>Fungi</taxon>
        <taxon>Dikarya</taxon>
        <taxon>Ascomycota</taxon>
        <taxon>Saccharomycotina</taxon>
        <taxon>Saccharomycetes</taxon>
        <taxon>Saccharomycetales</taxon>
        <taxon>Saccharomycetaceae</taxon>
        <taxon>Vanderwaltozyma</taxon>
    </lineage>
</organism>
<reference key="1">
    <citation type="journal article" date="2007" name="Proc. Natl. Acad. Sci. U.S.A.">
        <title>Independent sorting-out of thousands of duplicated gene pairs in two yeast species descended from a whole-genome duplication.</title>
        <authorList>
            <person name="Scannell D.R."/>
            <person name="Frank A.C."/>
            <person name="Conant G.C."/>
            <person name="Byrne K.P."/>
            <person name="Woolfit M."/>
            <person name="Wolfe K.H."/>
        </authorList>
    </citation>
    <scope>NUCLEOTIDE SEQUENCE [LARGE SCALE GENOMIC DNA]</scope>
    <source>
        <strain>ATCC 22028 / DSM 70294 / BCRC 21397 / CBS 2163 / NBRC 10782 / NRRL Y-8283 / UCD 57-17</strain>
    </source>
</reference>
<accession>A7THG7</accession>
<comment type="function">
    <text evidence="2">Aminopeptidase that preferentially cleaves di- and tripeptides. Also has low epoxide hydrolase activity (in vitro). Can hydrolyze the epoxide leukotriene LTA(4) but it forms preferentially 5,6-dihydroxy-7,9,11,14-eicosatetraenoic acid rather than the cytokine leukotriene B(4) as the product compared to the homologous mammalian enzyme (in vitro).</text>
</comment>
<comment type="catalytic activity">
    <reaction evidence="2">
        <text>an epoxide + H2O = an ethanediol</text>
        <dbReference type="Rhea" id="RHEA:19037"/>
        <dbReference type="ChEBI" id="CHEBI:15377"/>
        <dbReference type="ChEBI" id="CHEBI:32955"/>
        <dbReference type="ChEBI" id="CHEBI:140594"/>
        <dbReference type="EC" id="3.3.2.10"/>
    </reaction>
</comment>
<comment type="cofactor">
    <cofactor evidence="2">
        <name>Zn(2+)</name>
        <dbReference type="ChEBI" id="CHEBI:29105"/>
    </cofactor>
    <text evidence="2">Binds 1 zinc ion per subunit.</text>
</comment>
<comment type="subcellular location">
    <subcellularLocation>
        <location evidence="2">Cytoplasm</location>
    </subcellularLocation>
    <subcellularLocation>
        <location evidence="2">Nucleus</location>
    </subcellularLocation>
</comment>
<comment type="similarity">
    <text evidence="4">Belongs to the peptidase M1 family.</text>
</comment>